<feature type="chain" id="PRO_0000102088" description="U5 small nuclear ribonucleoprotein 200 kDa helicase">
    <location>
        <begin position="1"/>
        <end position="2145"/>
    </location>
</feature>
<feature type="domain" description="Helicase ATP-binding 1" evidence="3">
    <location>
        <begin position="484"/>
        <end position="667"/>
    </location>
</feature>
<feature type="domain" description="Helicase C-terminal" evidence="4">
    <location>
        <begin position="677"/>
        <end position="894"/>
    </location>
</feature>
<feature type="domain" description="SEC63 1" evidence="2">
    <location>
        <begin position="975"/>
        <end position="1278"/>
    </location>
</feature>
<feature type="domain" description="Helicase ATP-binding 2" evidence="3">
    <location>
        <begin position="1331"/>
        <end position="1506"/>
    </location>
</feature>
<feature type="domain" description="SEC63 2" evidence="2">
    <location>
        <begin position="1812"/>
        <end position="2124"/>
    </location>
</feature>
<feature type="region of interest" description="Disordered" evidence="5">
    <location>
        <begin position="54"/>
        <end position="82"/>
    </location>
</feature>
<feature type="region of interest" description="Disordered" evidence="5">
    <location>
        <begin position="202"/>
        <end position="243"/>
    </location>
</feature>
<feature type="short sequence motif" description="DEAH box" evidence="3">
    <location>
        <begin position="609"/>
        <end position="612"/>
    </location>
</feature>
<feature type="short sequence motif" description="DEAH box" evidence="3">
    <location>
        <begin position="1448"/>
        <end position="1451"/>
    </location>
</feature>
<feature type="compositionally biased region" description="Acidic residues" evidence="5">
    <location>
        <begin position="220"/>
        <end position="231"/>
    </location>
</feature>
<feature type="binding site" evidence="3">
    <location>
        <begin position="497"/>
        <end position="504"/>
    </location>
    <ligand>
        <name>ATP</name>
        <dbReference type="ChEBI" id="CHEBI:30616"/>
    </ligand>
</feature>
<feature type="binding site" evidence="3">
    <location>
        <begin position="1344"/>
        <end position="1351"/>
    </location>
    <ligand>
        <name>ATP</name>
        <dbReference type="ChEBI" id="CHEBI:30616"/>
    </ligand>
</feature>
<name>U520_CAEEL</name>
<proteinExistence type="evidence at protein level"/>
<comment type="function">
    <text evidence="1">Catalyzes the ATP-dependent unwinding of U4/U6 RNA duplices, an essential step in the assembly of a catalytically active spliceosome (By similarity). Plays a role in pre-mRNA splicing (By similarity).</text>
</comment>
<comment type="catalytic activity">
    <reaction evidence="1">
        <text>ATP + H2O = ADP + phosphate + H(+)</text>
        <dbReference type="Rhea" id="RHEA:13065"/>
        <dbReference type="ChEBI" id="CHEBI:15377"/>
        <dbReference type="ChEBI" id="CHEBI:15378"/>
        <dbReference type="ChEBI" id="CHEBI:30616"/>
        <dbReference type="ChEBI" id="CHEBI:43474"/>
        <dbReference type="ChEBI" id="CHEBI:456216"/>
        <dbReference type="EC" id="3.6.4.13"/>
    </reaction>
</comment>
<comment type="subcellular location">
    <subcellularLocation>
        <location evidence="1">Nucleus</location>
    </subcellularLocation>
</comment>
<comment type="domain">
    <text evidence="1">Contains two helicase domains. The N-terminal helicase domain has catalytic activity by itself, contrary to the C-terminal helicase domain that may have a regulatory role and enhance the activity of the first helicase domain.</text>
</comment>
<comment type="similarity">
    <text evidence="6">Belongs to the helicase family. SKI2 subfamily.</text>
</comment>
<gene>
    <name evidence="7" type="primary">snrp-200</name>
    <name evidence="7" type="ORF">Y46G5A.4</name>
</gene>
<protein>
    <recommendedName>
        <fullName evidence="1">U5 small nuclear ribonucleoprotein 200 kDa helicase</fullName>
        <ecNumber evidence="1">3.6.4.13</ecNumber>
    </recommendedName>
    <alternativeName>
        <fullName evidence="6">BRR2 homolog</fullName>
    </alternativeName>
</protein>
<organism>
    <name type="scientific">Caenorhabditis elegans</name>
    <dbReference type="NCBI Taxonomy" id="6239"/>
    <lineage>
        <taxon>Eukaryota</taxon>
        <taxon>Metazoa</taxon>
        <taxon>Ecdysozoa</taxon>
        <taxon>Nematoda</taxon>
        <taxon>Chromadorea</taxon>
        <taxon>Rhabditida</taxon>
        <taxon>Rhabditina</taxon>
        <taxon>Rhabditomorpha</taxon>
        <taxon>Rhabditoidea</taxon>
        <taxon>Rhabditidae</taxon>
        <taxon>Peloderinae</taxon>
        <taxon>Caenorhabditis</taxon>
    </lineage>
</organism>
<dbReference type="EC" id="3.6.4.13" evidence="1"/>
<dbReference type="EMBL" id="AL110485">
    <property type="protein sequence ID" value="CAB60351.1"/>
    <property type="molecule type" value="Genomic_DNA"/>
</dbReference>
<dbReference type="RefSeq" id="NP_001366952.1">
    <property type="nucleotide sequence ID" value="NM_001381632.2"/>
</dbReference>
<dbReference type="RefSeq" id="NP_496710.1">
    <property type="nucleotide sequence ID" value="NM_064309.3"/>
</dbReference>
<dbReference type="PDB" id="8RO0">
    <property type="method" value="EM"/>
    <property type="resolution" value="2.90 A"/>
    <property type="chains" value="B=1-2145"/>
</dbReference>
<dbReference type="PDBsum" id="8RO0"/>
<dbReference type="EMDB" id="EMD-19397"/>
<dbReference type="SMR" id="Q9U2G0"/>
<dbReference type="BioGRID" id="40201">
    <property type="interactions" value="21"/>
</dbReference>
<dbReference type="FunCoup" id="Q9U2G0">
    <property type="interactions" value="3114"/>
</dbReference>
<dbReference type="IntAct" id="Q9U2G0">
    <property type="interactions" value="1"/>
</dbReference>
<dbReference type="STRING" id="6239.Y46G5A.4.1"/>
<dbReference type="PaxDb" id="6239-Y46G5A.4"/>
<dbReference type="PeptideAtlas" id="Q9U2G0"/>
<dbReference type="EnsemblMetazoa" id="Y46G5A.4.1">
    <property type="protein sequence ID" value="Y46G5A.4.1"/>
    <property type="gene ID" value="WBGene00012896"/>
</dbReference>
<dbReference type="GeneID" id="174901"/>
<dbReference type="UCSC" id="Y46G5A.4">
    <property type="organism name" value="c. elegans"/>
</dbReference>
<dbReference type="AGR" id="WB:WBGene00012896"/>
<dbReference type="WormBase" id="Y46G5A.4">
    <property type="protein sequence ID" value="CE21971"/>
    <property type="gene ID" value="WBGene00012896"/>
    <property type="gene designation" value="snrp-200"/>
</dbReference>
<dbReference type="eggNOG" id="KOG0951">
    <property type="taxonomic scope" value="Eukaryota"/>
</dbReference>
<dbReference type="GeneTree" id="ENSGT00940000174511"/>
<dbReference type="HOGENOM" id="CLU_000335_1_0_1"/>
<dbReference type="InParanoid" id="Q9U2G0"/>
<dbReference type="OMA" id="MNPKEFN"/>
<dbReference type="OrthoDB" id="5575at2759"/>
<dbReference type="PhylomeDB" id="Q9U2G0"/>
<dbReference type="Reactome" id="R-CEL-72163">
    <property type="pathway name" value="mRNA Splicing - Major Pathway"/>
</dbReference>
<dbReference type="Reactome" id="R-CEL-72165">
    <property type="pathway name" value="mRNA Splicing - Minor Pathway"/>
</dbReference>
<dbReference type="PRO" id="PR:Q9U2G0"/>
<dbReference type="Proteomes" id="UP000001940">
    <property type="component" value="Chromosome II"/>
</dbReference>
<dbReference type="Bgee" id="WBGene00012896">
    <property type="expression patterns" value="Expressed in embryo and 4 other cell types or tissues"/>
</dbReference>
<dbReference type="GO" id="GO:0005681">
    <property type="term" value="C:spliceosomal complex"/>
    <property type="evidence" value="ECO:0000250"/>
    <property type="project" value="UniProtKB"/>
</dbReference>
<dbReference type="GO" id="GO:0005524">
    <property type="term" value="F:ATP binding"/>
    <property type="evidence" value="ECO:0007669"/>
    <property type="project" value="UniProtKB-KW"/>
</dbReference>
<dbReference type="GO" id="GO:0016887">
    <property type="term" value="F:ATP hydrolysis activity"/>
    <property type="evidence" value="ECO:0007669"/>
    <property type="project" value="InterPro"/>
</dbReference>
<dbReference type="GO" id="GO:0003676">
    <property type="term" value="F:nucleic acid binding"/>
    <property type="evidence" value="ECO:0007669"/>
    <property type="project" value="InterPro"/>
</dbReference>
<dbReference type="GO" id="GO:0003724">
    <property type="term" value="F:RNA helicase activity"/>
    <property type="evidence" value="ECO:0000318"/>
    <property type="project" value="GO_Central"/>
</dbReference>
<dbReference type="GO" id="GO:0000398">
    <property type="term" value="P:mRNA splicing, via spliceosome"/>
    <property type="evidence" value="ECO:0000250"/>
    <property type="project" value="UniProtKB"/>
</dbReference>
<dbReference type="GO" id="GO:0000388">
    <property type="term" value="P:spliceosome conformational change to release U4 (or U4atac) and U1 (or U11)"/>
    <property type="evidence" value="ECO:0000318"/>
    <property type="project" value="GO_Central"/>
</dbReference>
<dbReference type="CDD" id="cd18019">
    <property type="entry name" value="DEXHc_Brr2_1"/>
    <property type="match status" value="1"/>
</dbReference>
<dbReference type="CDD" id="cd18021">
    <property type="entry name" value="DEXHc_Brr2_2"/>
    <property type="match status" value="1"/>
</dbReference>
<dbReference type="CDD" id="cd18795">
    <property type="entry name" value="SF2_C_Ski2"/>
    <property type="match status" value="1"/>
</dbReference>
<dbReference type="FunFam" id="1.10.3380.10:FF:000002">
    <property type="entry name" value="Activating signal cointegrator 1 complex subunit 3"/>
    <property type="match status" value="1"/>
</dbReference>
<dbReference type="FunFam" id="2.60.40.150:FF:000133">
    <property type="entry name" value="Pre-mRNA splicing helicase, putative"/>
    <property type="match status" value="1"/>
</dbReference>
<dbReference type="FunFam" id="2.60.40.150:FF:000004">
    <property type="entry name" value="RNA helicase, activating signal cointegrator 1"/>
    <property type="match status" value="1"/>
</dbReference>
<dbReference type="FunFam" id="3.40.50.300:FF:000368">
    <property type="entry name" value="U5 small nuclear ribonucleoprotein 200 kDa helicase"/>
    <property type="match status" value="1"/>
</dbReference>
<dbReference type="FunFam" id="3.40.50.300:FF:003287">
    <property type="entry name" value="U5 small nuclear ribonucleoprotein 200 kDa helicase"/>
    <property type="match status" value="1"/>
</dbReference>
<dbReference type="FunFam" id="1.10.10.10:FF:000012">
    <property type="entry name" value="U5 small nuclear ribonucleoprotein helicase"/>
    <property type="match status" value="1"/>
</dbReference>
<dbReference type="FunFam" id="1.10.10.10:FF:000024">
    <property type="entry name" value="U5 small nuclear ribonucleoprotein helicase"/>
    <property type="match status" value="1"/>
</dbReference>
<dbReference type="FunFam" id="1.10.150.20:FF:000004">
    <property type="entry name" value="U5 small nuclear ribonucleoprotein helicase"/>
    <property type="match status" value="1"/>
</dbReference>
<dbReference type="FunFam" id="1.10.3380.10:FF:000001">
    <property type="entry name" value="U5 small nuclear ribonucleoprotein helicase"/>
    <property type="match status" value="1"/>
</dbReference>
<dbReference type="FunFam" id="3.40.50.300:FF:000062">
    <property type="entry name" value="U5 small nuclear ribonucleoprotein helicase"/>
    <property type="match status" value="1"/>
</dbReference>
<dbReference type="FunFam" id="3.40.50.300:FF:000254">
    <property type="entry name" value="U5 small nuclear ribonucleoprotein helicase"/>
    <property type="match status" value="1"/>
</dbReference>
<dbReference type="Gene3D" id="1.10.150.20">
    <property type="entry name" value="5' to 3' exonuclease, C-terminal subdomain"/>
    <property type="match status" value="2"/>
</dbReference>
<dbReference type="Gene3D" id="2.60.40.150">
    <property type="entry name" value="C2 domain"/>
    <property type="match status" value="2"/>
</dbReference>
<dbReference type="Gene3D" id="3.40.50.300">
    <property type="entry name" value="P-loop containing nucleotide triphosphate hydrolases"/>
    <property type="match status" value="4"/>
</dbReference>
<dbReference type="Gene3D" id="1.10.3380.10">
    <property type="entry name" value="Sec63 N-terminal domain-like domain"/>
    <property type="match status" value="2"/>
</dbReference>
<dbReference type="Gene3D" id="1.10.10.10">
    <property type="entry name" value="Winged helix-like DNA-binding domain superfamily/Winged helix DNA-binding domain"/>
    <property type="match status" value="2"/>
</dbReference>
<dbReference type="InterPro" id="IPR003593">
    <property type="entry name" value="AAA+_ATPase"/>
</dbReference>
<dbReference type="InterPro" id="IPR041094">
    <property type="entry name" value="Brr2_helicase_PWI"/>
</dbReference>
<dbReference type="InterPro" id="IPR048863">
    <property type="entry name" value="BRR2_plug"/>
</dbReference>
<dbReference type="InterPro" id="IPR035892">
    <property type="entry name" value="C2_domain_sf"/>
</dbReference>
<dbReference type="InterPro" id="IPR011545">
    <property type="entry name" value="DEAD/DEAH_box_helicase_dom"/>
</dbReference>
<dbReference type="InterPro" id="IPR050474">
    <property type="entry name" value="Hel308_SKI2-like"/>
</dbReference>
<dbReference type="InterPro" id="IPR014001">
    <property type="entry name" value="Helicase_ATP-bd"/>
</dbReference>
<dbReference type="InterPro" id="IPR001650">
    <property type="entry name" value="Helicase_C-like"/>
</dbReference>
<dbReference type="InterPro" id="IPR014756">
    <property type="entry name" value="Ig_E-set"/>
</dbReference>
<dbReference type="InterPro" id="IPR027417">
    <property type="entry name" value="P-loop_NTPase"/>
</dbReference>
<dbReference type="InterPro" id="IPR004179">
    <property type="entry name" value="Sec63-dom"/>
</dbReference>
<dbReference type="InterPro" id="IPR036388">
    <property type="entry name" value="WH-like_DNA-bd_sf"/>
</dbReference>
<dbReference type="InterPro" id="IPR036390">
    <property type="entry name" value="WH_DNA-bd_sf"/>
</dbReference>
<dbReference type="PANTHER" id="PTHR47961:SF4">
    <property type="entry name" value="ACTIVATING SIGNAL COINTEGRATOR 1 COMPLEX SUBUNIT 3"/>
    <property type="match status" value="1"/>
</dbReference>
<dbReference type="PANTHER" id="PTHR47961">
    <property type="entry name" value="DNA POLYMERASE THETA, PUTATIVE (AFU_ORTHOLOGUE AFUA_1G05260)-RELATED"/>
    <property type="match status" value="1"/>
</dbReference>
<dbReference type="Pfam" id="PF21188">
    <property type="entry name" value="BRR2_plug"/>
    <property type="match status" value="1"/>
</dbReference>
<dbReference type="Pfam" id="PF00270">
    <property type="entry name" value="DEAD"/>
    <property type="match status" value="2"/>
</dbReference>
<dbReference type="Pfam" id="PF00271">
    <property type="entry name" value="Helicase_C"/>
    <property type="match status" value="1"/>
</dbReference>
<dbReference type="Pfam" id="PF18149">
    <property type="entry name" value="Helicase_PWI"/>
    <property type="match status" value="1"/>
</dbReference>
<dbReference type="Pfam" id="PF02889">
    <property type="entry name" value="Sec63"/>
    <property type="match status" value="2"/>
</dbReference>
<dbReference type="Pfam" id="PF23445">
    <property type="entry name" value="SNRNP200_wHTH"/>
    <property type="match status" value="2"/>
</dbReference>
<dbReference type="PIRSF" id="PIRSF039073">
    <property type="entry name" value="BRR2"/>
    <property type="match status" value="1"/>
</dbReference>
<dbReference type="SMART" id="SM00382">
    <property type="entry name" value="AAA"/>
    <property type="match status" value="2"/>
</dbReference>
<dbReference type="SMART" id="SM00487">
    <property type="entry name" value="DEXDc"/>
    <property type="match status" value="2"/>
</dbReference>
<dbReference type="SMART" id="SM00490">
    <property type="entry name" value="HELICc"/>
    <property type="match status" value="1"/>
</dbReference>
<dbReference type="SMART" id="SM00973">
    <property type="entry name" value="Sec63"/>
    <property type="match status" value="2"/>
</dbReference>
<dbReference type="SUPFAM" id="SSF81296">
    <property type="entry name" value="E set domains"/>
    <property type="match status" value="1"/>
</dbReference>
<dbReference type="SUPFAM" id="SSF52540">
    <property type="entry name" value="P-loop containing nucleoside triphosphate hydrolases"/>
    <property type="match status" value="4"/>
</dbReference>
<dbReference type="SUPFAM" id="SSF158702">
    <property type="entry name" value="Sec63 N-terminal domain-like"/>
    <property type="match status" value="2"/>
</dbReference>
<dbReference type="SUPFAM" id="SSF46785">
    <property type="entry name" value="Winged helix' DNA-binding domain"/>
    <property type="match status" value="2"/>
</dbReference>
<dbReference type="PROSITE" id="PS51192">
    <property type="entry name" value="HELICASE_ATP_BIND_1"/>
    <property type="match status" value="2"/>
</dbReference>
<dbReference type="PROSITE" id="PS51194">
    <property type="entry name" value="HELICASE_CTER"/>
    <property type="match status" value="1"/>
</dbReference>
<accession>Q9U2G0</accession>
<keyword id="KW-0002">3D-structure</keyword>
<keyword id="KW-0067">ATP-binding</keyword>
<keyword id="KW-0347">Helicase</keyword>
<keyword id="KW-0378">Hydrolase</keyword>
<keyword id="KW-0507">mRNA processing</keyword>
<keyword id="KW-0508">mRNA splicing</keyword>
<keyword id="KW-0547">Nucleotide-binding</keyword>
<keyword id="KW-0539">Nucleus</keyword>
<keyword id="KW-1185">Reference proteome</keyword>
<keyword id="KW-0677">Repeat</keyword>
<keyword id="KW-0747">Spliceosome</keyword>
<reference key="1">
    <citation type="journal article" date="1998" name="Science">
        <title>Genome sequence of the nematode C. elegans: a platform for investigating biology.</title>
        <authorList>
            <consortium name="The C. elegans sequencing consortium"/>
        </authorList>
    </citation>
    <scope>NUCLEOTIDE SEQUENCE [LARGE SCALE GENOMIC DNA]</scope>
    <source>
        <strain>Bristol N2</strain>
    </source>
</reference>
<sequence>MADELARIQQYEYRQNSNLVLSVDYNLTDRRGREEPTGEVLPITDKEMRKMKMGDRAIKGKAPVQDQKKKRKKKDDEKAQQFGRNVLVDNNELMGAYKPRTQETKQTYEVILSFILDALGDVPREVLCGAADEVLLTLKNDKFRDKEKKKEVEALLGPLTDDRIAVLINLSKKISDFSIEEENKPEGDGDIYENEGVNVQFDSDEEEDDGGMVNEIKGDSEEESEEEEGVDTDYTATLKGDGHLTEDEQKARGILHPRDIDAHWIQRSLAKYFKDPLIAQQKQTEVIGILKNAADDRDAENQLVLLLGFDQFEFIKCLRQNRLMILYCTLLRQANEKERLQIEDDMRSRPELHPILALLQETDEGSVVQVEKSKRDAEKSKKAATAANEAISAGQWQAGRKMLDLNDLTFSQGSHLMSNKRCELPDGSYRRQKKSYEEIHVPALKPRPFAEGEKLVSVSELPKWAQPAFDGYKSLNRIQSRLCDSALRSKEHLLLCAPTGAGKTNVALLTMLQEIGNHLAEDGSVKLDEFKIVYIAPMKSLVQEMVGSFSKRLAPFGITVGEMTGDAQMSKEQFMATQVIVCTPEKYDVVTRKGGERAYNQMVRLLIIDEIHLLHDDRGPVLESIVVRTIRQMEQNHDECRLVGLSATLPNYQDVATFLRVKPEHLHFFDNSYRPVPLEQQYIGVTEKKALKRFQAMNEVVYDKIMEHAGKSQVLVFVHSRKETAKTAKAIRDACLEKDTLSAFMREGSASTEILRTEAEQAKNLDLKDLLPYGFAIHHAGMNRVDRTLVEDLFADRHIQVLFSTATLAWGVNLPAHTVIIKGTQIYNPEKGRWTELGALDIMQMLGRAGRPQYDDRGEGILITNHSELQYYLSLMNQQLPVESQMVSRLTDMLNAEVVLGTVSSVSEATNWLGYTFLFVRMLKNPTLYGITHEQARADPLLEQRRADLIHTACVLLDKAGLIKYDKRSGIIQATELGRIASHFYCTYESMQTYNKLLVETCSDIDLFRIFSMSSEFKLLSVRDEEKLELQKMAEHAPIPIKENLDEASAKTNVLLQAYISQLKLEGFALQADMVFVAQSAGRLFRALFEIVLWRGWAGLAQKVLTLCKMVTQRQWGSLNPLHQFKKIPSEVVRSIDKKNYSFDRLYDLDQHQLGDLIKMPKMGKPLFKFIRQFPKLEMTTLIQPITRTTMRIELTITPDFKWDEKVHGSAEGFWIFIEDTDGEKILHHEFFLLKQKFCSDEHVVKMIVPMFDPMPPLYYVRIVSDRWIGAETVLPISFRHLILPEKYPPPTELLDLQPLPISAVTNKEFQTVFAESGFKVFNPIQTQVFRTVFESNENVIVCAPNGSGKTAIAELAVLRHFENTPEAKAVYITPMEDMATKVYADWKRRLEPAIGHTIVLLTGEQTMDLKLAQRGQLIISTPERWDNISRRWKQRKSVQNVKLFIADDLHMIGASNGAVFEVVCSRTRYISSQLESAVRVVALSSSLTNARDLGMWLGCSASATFNFMPSTRPVPLDLEIKSFNLSHNASRFAAMERPVYQAICRHAGKLEPKPALVFVPVRRQTRPVAVALLTMALADGAPKRFLRLAEHDDTFQALLADIEDESLRESVSCGVGFLHEGTAPKDVHIVQQLFESNAIQVCVVPRGMCYQIEMSAYLVVVMDTQFYNGKYHVYEDYPIADMLHMVGLANRPILDSDAKCVVMCQTSKRAYYKKFLCDPLPVESHLDHCLHDHFNAEIVTKTIENKQDAIDYLTWTLLYRRMTQNPNYYNLQGTTHRHLSDALSELVELTLKDLENSKCIAVKDEMDTVSLNLGMIASYYYISYQTIELFSMSLKEKTKTRALIEIISASSEFGNVPMRHKEDVILRQLAERLPGQLKNQKFTDPHVKVNLLIHAHLSRVKLTAELNKDTELIVLRACRLVQACVDVLSSNGWLSPAIHAMELSQMLTQAMYSNEPYLKQLPHCSAALLERAKAKEVTSVFELLELENDDRSDILQMEGAELADVARFCNHYPSIEVATELENDVVTSNDNLMLAVSLERDNDIDGLAPPVVAPLFPQKRKEEGWWLVIGDSESNALLTIKRLVINEKSSVQLDFAAPRPGHHKFKLFFISDSYLGADQEFDVAFKVEEPGRSNRKRKHEKEED</sequence>
<evidence type="ECO:0000250" key="1">
    <source>
        <dbReference type="UniProtKB" id="O75643"/>
    </source>
</evidence>
<evidence type="ECO:0000255" key="2"/>
<evidence type="ECO:0000255" key="3">
    <source>
        <dbReference type="PROSITE-ProRule" id="PRU00541"/>
    </source>
</evidence>
<evidence type="ECO:0000255" key="4">
    <source>
        <dbReference type="PROSITE-ProRule" id="PRU00542"/>
    </source>
</evidence>
<evidence type="ECO:0000256" key="5">
    <source>
        <dbReference type="SAM" id="MobiDB-lite"/>
    </source>
</evidence>
<evidence type="ECO:0000305" key="6"/>
<evidence type="ECO:0000312" key="7">
    <source>
        <dbReference type="WormBase" id="Y46G5A.4"/>
    </source>
</evidence>